<feature type="chain" id="PRO_0000105189" description="Glutamyl-tRNA(Gln) amidotransferase subunit A">
    <location>
        <begin position="1"/>
        <end position="484"/>
    </location>
</feature>
<feature type="active site" description="Charge relay system" evidence="1">
    <location>
        <position position="77"/>
    </location>
</feature>
<feature type="active site" description="Charge relay system" evidence="1">
    <location>
        <position position="152"/>
    </location>
</feature>
<feature type="active site" description="Acyl-ester intermediate" evidence="1">
    <location>
        <position position="176"/>
    </location>
</feature>
<keyword id="KW-0002">3D-structure</keyword>
<keyword id="KW-0067">ATP-binding</keyword>
<keyword id="KW-0436">Ligase</keyword>
<keyword id="KW-0547">Nucleotide-binding</keyword>
<keyword id="KW-0648">Protein biosynthesis</keyword>
<keyword id="KW-1185">Reference proteome</keyword>
<sequence length="484" mass="51863">MLHQLTLAEIARALADKQFSAEELTRTLLGRIRQLDPQLNSFISITDDLAIAQAKAADERRANGENGALLGAPIAHKDLFCTQGVRTSCGSKMLDNFVSPYDATVVEKLTAAGAVTLGKLNMDEFAMGSSNQSSHYGAVKNPWSLDRVPGGSSGGSAAAVAARLLPAATGTDTGGSIRQPAALTNLTGIKPTYGRVSRWGMIAYASSLDQGGPLARTAEDCALMLGVMAGFDPKDSTSVEQPVDDYLAALQKPLSGLRIGLPREYFGAGLDSRIADAVLAVVEELKTLGATVKDISLPNMQHAIPAYYVIAPAEASSNLSRFDGVRYGYRCDAPQNLEDLYKRSRAEGFGSEVKNRIMVGTYALSAGYYDAYYLQAQKIRRLIKNDFVSAFAEVDVILGPTTPNPAWKIGEKNDDPVSQYLEDIYTITANLAGLPGLSMPAGFVDGLPVGVQLLAPYFQEGRLLNVAHQYQQVSDWHTRTPAGF</sequence>
<organism>
    <name type="scientific">Pseudomonas aeruginosa (strain ATCC 15692 / DSM 22644 / CIP 104116 / JCM 14847 / LMG 12228 / 1C / PRS 101 / PAO1)</name>
    <dbReference type="NCBI Taxonomy" id="208964"/>
    <lineage>
        <taxon>Bacteria</taxon>
        <taxon>Pseudomonadati</taxon>
        <taxon>Pseudomonadota</taxon>
        <taxon>Gammaproteobacteria</taxon>
        <taxon>Pseudomonadales</taxon>
        <taxon>Pseudomonadaceae</taxon>
        <taxon>Pseudomonas</taxon>
    </lineage>
</organism>
<reference key="1">
    <citation type="journal article" date="2000" name="Nature">
        <title>Complete genome sequence of Pseudomonas aeruginosa PAO1, an opportunistic pathogen.</title>
        <authorList>
            <person name="Stover C.K."/>
            <person name="Pham X.-Q.T."/>
            <person name="Erwin A.L."/>
            <person name="Mizoguchi S.D."/>
            <person name="Warrener P."/>
            <person name="Hickey M.J."/>
            <person name="Brinkman F.S.L."/>
            <person name="Hufnagle W.O."/>
            <person name="Kowalik D.J."/>
            <person name="Lagrou M."/>
            <person name="Garber R.L."/>
            <person name="Goltry L."/>
            <person name="Tolentino E."/>
            <person name="Westbrock-Wadman S."/>
            <person name="Yuan Y."/>
            <person name="Brody L.L."/>
            <person name="Coulter S.N."/>
            <person name="Folger K.R."/>
            <person name="Kas A."/>
            <person name="Larbig K."/>
            <person name="Lim R.M."/>
            <person name="Smith K.A."/>
            <person name="Spencer D.H."/>
            <person name="Wong G.K.-S."/>
            <person name="Wu Z."/>
            <person name="Paulsen I.T."/>
            <person name="Reizer J."/>
            <person name="Saier M.H. Jr."/>
            <person name="Hancock R.E.W."/>
            <person name="Lory S."/>
            <person name="Olson M.V."/>
        </authorList>
    </citation>
    <scope>NUCLEOTIDE SEQUENCE [LARGE SCALE GENOMIC DNA]</scope>
    <source>
        <strain>ATCC 15692 / DSM 22644 / CIP 104116 / JCM 14847 / LMG 12228 / 1C / PRS 101 / PAO1</strain>
    </source>
</reference>
<accession>Q9HVT8</accession>
<protein>
    <recommendedName>
        <fullName evidence="1">Glutamyl-tRNA(Gln) amidotransferase subunit A</fullName>
        <shortName evidence="1">Glu-ADT subunit A</shortName>
        <ecNumber evidence="1">6.3.5.7</ecNumber>
    </recommendedName>
</protein>
<comment type="function">
    <text evidence="1">Allows the formation of correctly charged Gln-tRNA(Gln) through the transamidation of misacylated Glu-tRNA(Gln) in organisms which lack glutaminyl-tRNA synthetase. The reaction takes place in the presence of glutamine and ATP through an activated gamma-phospho-Glu-tRNA(Gln).</text>
</comment>
<comment type="catalytic activity">
    <reaction evidence="1">
        <text>L-glutamyl-tRNA(Gln) + L-glutamine + ATP + H2O = L-glutaminyl-tRNA(Gln) + L-glutamate + ADP + phosphate + H(+)</text>
        <dbReference type="Rhea" id="RHEA:17521"/>
        <dbReference type="Rhea" id="RHEA-COMP:9681"/>
        <dbReference type="Rhea" id="RHEA-COMP:9684"/>
        <dbReference type="ChEBI" id="CHEBI:15377"/>
        <dbReference type="ChEBI" id="CHEBI:15378"/>
        <dbReference type="ChEBI" id="CHEBI:29985"/>
        <dbReference type="ChEBI" id="CHEBI:30616"/>
        <dbReference type="ChEBI" id="CHEBI:43474"/>
        <dbReference type="ChEBI" id="CHEBI:58359"/>
        <dbReference type="ChEBI" id="CHEBI:78520"/>
        <dbReference type="ChEBI" id="CHEBI:78521"/>
        <dbReference type="ChEBI" id="CHEBI:456216"/>
        <dbReference type="EC" id="6.3.5.7"/>
    </reaction>
</comment>
<comment type="subunit">
    <text evidence="1">Heterotrimer of A, B and C subunits.</text>
</comment>
<comment type="similarity">
    <text evidence="1">Belongs to the amidase family. GatA subfamily.</text>
</comment>
<proteinExistence type="evidence at protein level"/>
<name>GATA_PSEAE</name>
<gene>
    <name evidence="1" type="primary">gatA</name>
    <name type="ordered locus">PA4483</name>
</gene>
<evidence type="ECO:0000255" key="1">
    <source>
        <dbReference type="HAMAP-Rule" id="MF_00120"/>
    </source>
</evidence>
<dbReference type="EC" id="6.3.5.7" evidence="1"/>
<dbReference type="EMBL" id="AE004091">
    <property type="protein sequence ID" value="AAG07871.1"/>
    <property type="molecule type" value="Genomic_DNA"/>
</dbReference>
<dbReference type="PIR" id="H83084">
    <property type="entry name" value="H83084"/>
</dbReference>
<dbReference type="RefSeq" id="NP_253173.1">
    <property type="nucleotide sequence ID" value="NC_002516.2"/>
</dbReference>
<dbReference type="RefSeq" id="WP_003112871.1">
    <property type="nucleotide sequence ID" value="NZ_QZGE01000004.1"/>
</dbReference>
<dbReference type="PDB" id="4WJ3">
    <property type="method" value="X-ray"/>
    <property type="resolution" value="3.70 A"/>
    <property type="chains" value="A/D/G/J=1-484"/>
</dbReference>
<dbReference type="PDBsum" id="4WJ3"/>
<dbReference type="SMR" id="Q9HVT8"/>
<dbReference type="STRING" id="208964.PA4483"/>
<dbReference type="PaxDb" id="208964-PA4483"/>
<dbReference type="GeneID" id="881180"/>
<dbReference type="KEGG" id="pae:PA4483"/>
<dbReference type="PATRIC" id="fig|208964.12.peg.4693"/>
<dbReference type="PseudoCAP" id="PA4483"/>
<dbReference type="HOGENOM" id="CLU_009600_0_3_6"/>
<dbReference type="InParanoid" id="Q9HVT8"/>
<dbReference type="OrthoDB" id="9811471at2"/>
<dbReference type="PhylomeDB" id="Q9HVT8"/>
<dbReference type="BioCyc" id="PAER208964:G1FZ6-4572-MONOMER"/>
<dbReference type="EvolutionaryTrace" id="Q9HVT8"/>
<dbReference type="Proteomes" id="UP000002438">
    <property type="component" value="Chromosome"/>
</dbReference>
<dbReference type="GO" id="GO:0030956">
    <property type="term" value="C:glutamyl-tRNA(Gln) amidotransferase complex"/>
    <property type="evidence" value="ECO:0007669"/>
    <property type="project" value="InterPro"/>
</dbReference>
<dbReference type="GO" id="GO:0005524">
    <property type="term" value="F:ATP binding"/>
    <property type="evidence" value="ECO:0007669"/>
    <property type="project" value="UniProtKB-KW"/>
</dbReference>
<dbReference type="GO" id="GO:0050567">
    <property type="term" value="F:glutaminyl-tRNA synthase (glutamine-hydrolyzing) activity"/>
    <property type="evidence" value="ECO:0007669"/>
    <property type="project" value="UniProtKB-UniRule"/>
</dbReference>
<dbReference type="GO" id="GO:0006412">
    <property type="term" value="P:translation"/>
    <property type="evidence" value="ECO:0007669"/>
    <property type="project" value="UniProtKB-UniRule"/>
</dbReference>
<dbReference type="Gene3D" id="3.90.1300.10">
    <property type="entry name" value="Amidase signature (AS) domain"/>
    <property type="match status" value="1"/>
</dbReference>
<dbReference type="HAMAP" id="MF_00120">
    <property type="entry name" value="GatA"/>
    <property type="match status" value="1"/>
</dbReference>
<dbReference type="InterPro" id="IPR000120">
    <property type="entry name" value="Amidase"/>
</dbReference>
<dbReference type="InterPro" id="IPR020556">
    <property type="entry name" value="Amidase_CS"/>
</dbReference>
<dbReference type="InterPro" id="IPR023631">
    <property type="entry name" value="Amidase_dom"/>
</dbReference>
<dbReference type="InterPro" id="IPR036928">
    <property type="entry name" value="AS_sf"/>
</dbReference>
<dbReference type="InterPro" id="IPR004412">
    <property type="entry name" value="GatA"/>
</dbReference>
<dbReference type="NCBIfam" id="TIGR00132">
    <property type="entry name" value="gatA"/>
    <property type="match status" value="1"/>
</dbReference>
<dbReference type="PANTHER" id="PTHR11895:SF151">
    <property type="entry name" value="GLUTAMYL-TRNA(GLN) AMIDOTRANSFERASE SUBUNIT A"/>
    <property type="match status" value="1"/>
</dbReference>
<dbReference type="PANTHER" id="PTHR11895">
    <property type="entry name" value="TRANSAMIDASE"/>
    <property type="match status" value="1"/>
</dbReference>
<dbReference type="Pfam" id="PF01425">
    <property type="entry name" value="Amidase"/>
    <property type="match status" value="1"/>
</dbReference>
<dbReference type="SUPFAM" id="SSF75304">
    <property type="entry name" value="Amidase signature (AS) enzymes"/>
    <property type="match status" value="1"/>
</dbReference>
<dbReference type="PROSITE" id="PS00571">
    <property type="entry name" value="AMIDASES"/>
    <property type="match status" value="1"/>
</dbReference>